<proteinExistence type="inferred from homology"/>
<reference key="1">
    <citation type="journal article" date="2001" name="Lancet">
        <title>Whole genome sequencing of meticillin-resistant Staphylococcus aureus.</title>
        <authorList>
            <person name="Kuroda M."/>
            <person name="Ohta T."/>
            <person name="Uchiyama I."/>
            <person name="Baba T."/>
            <person name="Yuzawa H."/>
            <person name="Kobayashi I."/>
            <person name="Cui L."/>
            <person name="Oguchi A."/>
            <person name="Aoki K."/>
            <person name="Nagai Y."/>
            <person name="Lian J.-Q."/>
            <person name="Ito T."/>
            <person name="Kanamori M."/>
            <person name="Matsumaru H."/>
            <person name="Maruyama A."/>
            <person name="Murakami H."/>
            <person name="Hosoyama A."/>
            <person name="Mizutani-Ui Y."/>
            <person name="Takahashi N.K."/>
            <person name="Sawano T."/>
            <person name="Inoue R."/>
            <person name="Kaito C."/>
            <person name="Sekimizu K."/>
            <person name="Hirakawa H."/>
            <person name="Kuhara S."/>
            <person name="Goto S."/>
            <person name="Yabuzaki J."/>
            <person name="Kanehisa M."/>
            <person name="Yamashita A."/>
            <person name="Oshima K."/>
            <person name="Furuya K."/>
            <person name="Yoshino C."/>
            <person name="Shiba T."/>
            <person name="Hattori M."/>
            <person name="Ogasawara N."/>
            <person name="Hayashi H."/>
            <person name="Hiramatsu K."/>
        </authorList>
    </citation>
    <scope>NUCLEOTIDE SEQUENCE [LARGE SCALE GENOMIC DNA]</scope>
    <source>
        <strain>Mu50 / ATCC 700699</strain>
    </source>
</reference>
<name>RPOB_STAAM</name>
<feature type="chain" id="PRO_0000047959" description="DNA-directed RNA polymerase subunit beta">
    <location>
        <begin position="1"/>
        <end position="1183"/>
    </location>
</feature>
<dbReference type="EC" id="2.7.7.6" evidence="1"/>
<dbReference type="EMBL" id="BA000017">
    <property type="protein sequence ID" value="BAB56704.1"/>
    <property type="molecule type" value="Genomic_DNA"/>
</dbReference>
<dbReference type="RefSeq" id="WP_000918672.1">
    <property type="nucleotide sequence ID" value="NC_002758.2"/>
</dbReference>
<dbReference type="SMR" id="Q932F8"/>
<dbReference type="KEGG" id="sav:SAV0542"/>
<dbReference type="HOGENOM" id="CLU_000524_4_1_9"/>
<dbReference type="PhylomeDB" id="Q932F8"/>
<dbReference type="Proteomes" id="UP000002481">
    <property type="component" value="Chromosome"/>
</dbReference>
<dbReference type="GO" id="GO:0000428">
    <property type="term" value="C:DNA-directed RNA polymerase complex"/>
    <property type="evidence" value="ECO:0007669"/>
    <property type="project" value="UniProtKB-KW"/>
</dbReference>
<dbReference type="GO" id="GO:0003677">
    <property type="term" value="F:DNA binding"/>
    <property type="evidence" value="ECO:0007669"/>
    <property type="project" value="UniProtKB-UniRule"/>
</dbReference>
<dbReference type="GO" id="GO:0003899">
    <property type="term" value="F:DNA-directed RNA polymerase activity"/>
    <property type="evidence" value="ECO:0007669"/>
    <property type="project" value="UniProtKB-UniRule"/>
</dbReference>
<dbReference type="GO" id="GO:0032549">
    <property type="term" value="F:ribonucleoside binding"/>
    <property type="evidence" value="ECO:0007669"/>
    <property type="project" value="InterPro"/>
</dbReference>
<dbReference type="GO" id="GO:0006351">
    <property type="term" value="P:DNA-templated transcription"/>
    <property type="evidence" value="ECO:0007669"/>
    <property type="project" value="UniProtKB-UniRule"/>
</dbReference>
<dbReference type="CDD" id="cd00653">
    <property type="entry name" value="RNA_pol_B_RPB2"/>
    <property type="match status" value="1"/>
</dbReference>
<dbReference type="FunFam" id="3.90.1800.10:FF:000001">
    <property type="entry name" value="DNA-directed RNA polymerase subunit beta"/>
    <property type="match status" value="1"/>
</dbReference>
<dbReference type="Gene3D" id="2.40.50.100">
    <property type="match status" value="1"/>
</dbReference>
<dbReference type="Gene3D" id="2.40.50.150">
    <property type="match status" value="1"/>
</dbReference>
<dbReference type="Gene3D" id="3.90.1100.10">
    <property type="match status" value="3"/>
</dbReference>
<dbReference type="Gene3D" id="2.40.270.10">
    <property type="entry name" value="DNA-directed RNA polymerase, subunit 2, domain 6"/>
    <property type="match status" value="1"/>
</dbReference>
<dbReference type="Gene3D" id="3.90.1800.10">
    <property type="entry name" value="RNA polymerase alpha subunit dimerisation domain"/>
    <property type="match status" value="1"/>
</dbReference>
<dbReference type="Gene3D" id="3.90.1110.10">
    <property type="entry name" value="RNA polymerase Rpb2, domain 2"/>
    <property type="match status" value="1"/>
</dbReference>
<dbReference type="HAMAP" id="MF_01321">
    <property type="entry name" value="RNApol_bact_RpoB"/>
    <property type="match status" value="1"/>
</dbReference>
<dbReference type="InterPro" id="IPR019462">
    <property type="entry name" value="DNA-dir_RNA_pol_bsu_external_1"/>
</dbReference>
<dbReference type="InterPro" id="IPR015712">
    <property type="entry name" value="DNA-dir_RNA_pol_su2"/>
</dbReference>
<dbReference type="InterPro" id="IPR007120">
    <property type="entry name" value="DNA-dir_RNAP_su2_dom"/>
</dbReference>
<dbReference type="InterPro" id="IPR037033">
    <property type="entry name" value="DNA-dir_RNAP_su2_hyb_sf"/>
</dbReference>
<dbReference type="InterPro" id="IPR010243">
    <property type="entry name" value="RNA_pol_bsu_bac"/>
</dbReference>
<dbReference type="InterPro" id="IPR007121">
    <property type="entry name" value="RNA_pol_bsu_CS"/>
</dbReference>
<dbReference type="InterPro" id="IPR007644">
    <property type="entry name" value="RNA_pol_bsu_protrusion"/>
</dbReference>
<dbReference type="InterPro" id="IPR007642">
    <property type="entry name" value="RNA_pol_Rpb2_2"/>
</dbReference>
<dbReference type="InterPro" id="IPR037034">
    <property type="entry name" value="RNA_pol_Rpb2_2_sf"/>
</dbReference>
<dbReference type="InterPro" id="IPR007645">
    <property type="entry name" value="RNA_pol_Rpb2_3"/>
</dbReference>
<dbReference type="InterPro" id="IPR007641">
    <property type="entry name" value="RNA_pol_Rpb2_7"/>
</dbReference>
<dbReference type="InterPro" id="IPR014724">
    <property type="entry name" value="RNA_pol_RPB2_OB-fold"/>
</dbReference>
<dbReference type="NCBIfam" id="NF001616">
    <property type="entry name" value="PRK00405.1"/>
    <property type="match status" value="1"/>
</dbReference>
<dbReference type="NCBIfam" id="TIGR02013">
    <property type="entry name" value="rpoB"/>
    <property type="match status" value="1"/>
</dbReference>
<dbReference type="PANTHER" id="PTHR20856">
    <property type="entry name" value="DNA-DIRECTED RNA POLYMERASE I SUBUNIT 2"/>
    <property type="match status" value="1"/>
</dbReference>
<dbReference type="Pfam" id="PF04563">
    <property type="entry name" value="RNA_pol_Rpb2_1"/>
    <property type="match status" value="1"/>
</dbReference>
<dbReference type="Pfam" id="PF04561">
    <property type="entry name" value="RNA_pol_Rpb2_2"/>
    <property type="match status" value="2"/>
</dbReference>
<dbReference type="Pfam" id="PF04565">
    <property type="entry name" value="RNA_pol_Rpb2_3"/>
    <property type="match status" value="1"/>
</dbReference>
<dbReference type="Pfam" id="PF10385">
    <property type="entry name" value="RNA_pol_Rpb2_45"/>
    <property type="match status" value="1"/>
</dbReference>
<dbReference type="Pfam" id="PF00562">
    <property type="entry name" value="RNA_pol_Rpb2_6"/>
    <property type="match status" value="1"/>
</dbReference>
<dbReference type="Pfam" id="PF04560">
    <property type="entry name" value="RNA_pol_Rpb2_7"/>
    <property type="match status" value="1"/>
</dbReference>
<dbReference type="SUPFAM" id="SSF64484">
    <property type="entry name" value="beta and beta-prime subunits of DNA dependent RNA-polymerase"/>
    <property type="match status" value="1"/>
</dbReference>
<dbReference type="PROSITE" id="PS01166">
    <property type="entry name" value="RNA_POL_BETA"/>
    <property type="match status" value="1"/>
</dbReference>
<protein>
    <recommendedName>
        <fullName evidence="1">DNA-directed RNA polymerase subunit beta</fullName>
        <shortName evidence="1">RNAP subunit beta</shortName>
        <ecNumber evidence="1">2.7.7.6</ecNumber>
    </recommendedName>
    <alternativeName>
        <fullName evidence="1">RNA polymerase subunit beta</fullName>
    </alternativeName>
    <alternativeName>
        <fullName evidence="1">Transcriptase subunit beta</fullName>
    </alternativeName>
</protein>
<gene>
    <name evidence="1" type="primary">rpoB</name>
    <name type="ordered locus">SAV0542</name>
</gene>
<accession>Q932F8</accession>
<comment type="function">
    <text evidence="1">DNA-dependent RNA polymerase catalyzes the transcription of DNA into RNA using the four ribonucleoside triphosphates as substrates.</text>
</comment>
<comment type="catalytic activity">
    <reaction evidence="1">
        <text>RNA(n) + a ribonucleoside 5'-triphosphate = RNA(n+1) + diphosphate</text>
        <dbReference type="Rhea" id="RHEA:21248"/>
        <dbReference type="Rhea" id="RHEA-COMP:14527"/>
        <dbReference type="Rhea" id="RHEA-COMP:17342"/>
        <dbReference type="ChEBI" id="CHEBI:33019"/>
        <dbReference type="ChEBI" id="CHEBI:61557"/>
        <dbReference type="ChEBI" id="CHEBI:140395"/>
        <dbReference type="EC" id="2.7.7.6"/>
    </reaction>
</comment>
<comment type="subunit">
    <text evidence="1">The RNAP catalytic core consists of 2 alpha, 1 beta, 1 beta' and 1 omega subunit. When a sigma factor is associated with the core the holoenzyme is formed, which can initiate transcription.</text>
</comment>
<comment type="similarity">
    <text evidence="1">Belongs to the RNA polymerase beta chain family.</text>
</comment>
<sequence>MAGQVVQYGRHRKRRNYARISEVLELPNLIEIQTKSYEWFLREGLIEMFRDISPIEDFTGNLSLEFVDYRLGEPKYDLEESKNRDATYAAPLRVKVRLIIKETGEVKEQEVFMGDFPLMTDTGTFVINGAERVIVSQLVRSPSVYFNEKIDKNGRENYDATIIPNRGAWLEYETDAKDVVYVRIDRTRKLPLTVLLRALGFSSDQEIVDLLGDNEYLRNTLEKDGTENTEQALLEIYERLRPGEPPTVENAKSLLYSRFFDPKRYDLASVGRYKTNKKLHLKHRLFNQKLAEPIVNTETGEIVVEEGTVLDRRKIDEIMDVLESNANSEVFELHGSVIDEPVEIQSIKVYVPNDDEGRTTTVIGNAFPDSEVKCITPADIIASMSYFFNLLSGIGYTDDIDHLGNRRLRSVGELLQNQFRIGLSRMERVVRERMSIQDTESITPQQLINIRPVIASIKEFFGSSQLSQFMDQANPLAELTYKRRLSALGPGGLTRERAQMEVRDVHYSHYGRMCPIETPEGPNIGLINSLSSYARVNEFGFIETPYRKVDLDTHAITDQIDYLTADEEDSYVVAQANSKLDENGRFMDDEVVCRFRGNNTVMAKEKMDYMDVSPKQVVSAATACIPFLENDDSNRALMGANMQRQAVPLMNPEAPFVGTGMEHVAARDSGAAITAKHRGRVEHVESNEILVRRLVEENGVEHEGELDRYPLAKFKRSNSGTCYNQRPIVAVGDVVEYNEILADGPSMELGEMALGRNVVVGFMTWDGYNYEDAVIMSERLVKDDVYTSIHIEEYESEARDTKLGPEEITRDIPNVSESALKNLDDRGIVYIGAEVKDGDILVGKVTPKGVTELTAEERLLHAIFGEKAREVRDTSLRVPHGAGGIVLDVKVFNREEGDDTLSPGVNQLVRVYIVQKRKIHVGDKMCGRHGNKGVISKIVPEEDMPYLPDGRPIDIMLNPLGVPSRMNIGQVLELHLGMAAKNLGIHVASPVFDGANDDDVWSTIEEAGMARDGKTVLYDGRTGEPFDNRISVGVMYMLKLAHMVDDKLHARSTGPYSLVTQQPLGGKAQFGGQRFGEMEVWALEAYGAAYTLQEILTYKSDDTVGRVKTYEAIVKGENISRPSVPESFRVLMKELQSLGLDVKVMDEQDNEIEMTDVDDDDVVERKVDLQQNDAPETQKEVTD</sequence>
<organism>
    <name type="scientific">Staphylococcus aureus (strain Mu50 / ATCC 700699)</name>
    <dbReference type="NCBI Taxonomy" id="158878"/>
    <lineage>
        <taxon>Bacteria</taxon>
        <taxon>Bacillati</taxon>
        <taxon>Bacillota</taxon>
        <taxon>Bacilli</taxon>
        <taxon>Bacillales</taxon>
        <taxon>Staphylococcaceae</taxon>
        <taxon>Staphylococcus</taxon>
    </lineage>
</organism>
<evidence type="ECO:0000255" key="1">
    <source>
        <dbReference type="HAMAP-Rule" id="MF_01321"/>
    </source>
</evidence>
<keyword id="KW-0240">DNA-directed RNA polymerase</keyword>
<keyword id="KW-0548">Nucleotidyltransferase</keyword>
<keyword id="KW-0804">Transcription</keyword>
<keyword id="KW-0808">Transferase</keyword>